<feature type="chain" id="PRO_0000234888" description="Large ribosomal subunit protein uL10">
    <location>
        <begin position="1"/>
        <end position="172"/>
    </location>
</feature>
<reference key="1">
    <citation type="journal article" date="2004" name="Nature">
        <title>Genome sequence of Silicibacter pomeroyi reveals adaptations to the marine environment.</title>
        <authorList>
            <person name="Moran M.A."/>
            <person name="Buchan A."/>
            <person name="Gonzalez J.M."/>
            <person name="Heidelberg J.F."/>
            <person name="Whitman W.B."/>
            <person name="Kiene R.P."/>
            <person name="Henriksen J.R."/>
            <person name="King G.M."/>
            <person name="Belas R."/>
            <person name="Fuqua C."/>
            <person name="Brinkac L.M."/>
            <person name="Lewis M."/>
            <person name="Johri S."/>
            <person name="Weaver B."/>
            <person name="Pai G."/>
            <person name="Eisen J.A."/>
            <person name="Rahe E."/>
            <person name="Sheldon W.M."/>
            <person name="Ye W."/>
            <person name="Miller T.R."/>
            <person name="Carlton J."/>
            <person name="Rasko D.A."/>
            <person name="Paulsen I.T."/>
            <person name="Ren Q."/>
            <person name="Daugherty S.C."/>
            <person name="DeBoy R.T."/>
            <person name="Dodson R.J."/>
            <person name="Durkin A.S."/>
            <person name="Madupu R."/>
            <person name="Nelson W.C."/>
            <person name="Sullivan S.A."/>
            <person name="Rosovitz M.J."/>
            <person name="Haft D.H."/>
            <person name="Selengut J."/>
            <person name="Ward N."/>
        </authorList>
    </citation>
    <scope>NUCLEOTIDE SEQUENCE [LARGE SCALE GENOMIC DNA]</scope>
    <source>
        <strain>ATCC 700808 / DSM 15171 / DSS-3</strain>
    </source>
</reference>
<reference key="2">
    <citation type="journal article" date="2014" name="Stand. Genomic Sci.">
        <title>An updated genome annotation for the model marine bacterium Ruegeria pomeroyi DSS-3.</title>
        <authorList>
            <person name="Rivers A.R."/>
            <person name="Smith C.B."/>
            <person name="Moran M.A."/>
        </authorList>
    </citation>
    <scope>GENOME REANNOTATION</scope>
    <source>
        <strain>ATCC 700808 / DSM 15171 / DSS-3</strain>
    </source>
</reference>
<protein>
    <recommendedName>
        <fullName evidence="1">Large ribosomal subunit protein uL10</fullName>
    </recommendedName>
    <alternativeName>
        <fullName evidence="2">50S ribosomal protein L10</fullName>
    </alternativeName>
</protein>
<comment type="function">
    <text evidence="1">Forms part of the ribosomal stalk, playing a central role in the interaction of the ribosome with GTP-bound translation factors.</text>
</comment>
<comment type="subunit">
    <text evidence="1">Part of the ribosomal stalk of the 50S ribosomal subunit. The N-terminus interacts with L11 and the large rRNA to form the base of the stalk. The C-terminus forms an elongated spine to which L12 dimers bind in a sequential fashion forming a multimeric L10(L12)X complex.</text>
</comment>
<comment type="similarity">
    <text evidence="1">Belongs to the universal ribosomal protein uL10 family.</text>
</comment>
<comment type="sequence caution" evidence="2">
    <conflict type="erroneous initiation">
        <sequence resource="EMBL-CDS" id="AAV96735"/>
    </conflict>
</comment>
<proteinExistence type="inferred from homology"/>
<accession>Q5LMQ3</accession>
<organism>
    <name type="scientific">Ruegeria pomeroyi (strain ATCC 700808 / DSM 15171 / DSS-3)</name>
    <name type="common">Silicibacter pomeroyi</name>
    <dbReference type="NCBI Taxonomy" id="246200"/>
    <lineage>
        <taxon>Bacteria</taxon>
        <taxon>Pseudomonadati</taxon>
        <taxon>Pseudomonadota</taxon>
        <taxon>Alphaproteobacteria</taxon>
        <taxon>Rhodobacterales</taxon>
        <taxon>Roseobacteraceae</taxon>
        <taxon>Ruegeria</taxon>
    </lineage>
</organism>
<keyword id="KW-1185">Reference proteome</keyword>
<keyword id="KW-0687">Ribonucleoprotein</keyword>
<keyword id="KW-0689">Ribosomal protein</keyword>
<keyword id="KW-0694">RNA-binding</keyword>
<keyword id="KW-0699">rRNA-binding</keyword>
<dbReference type="EMBL" id="CP000031">
    <property type="protein sequence ID" value="AAV96735.1"/>
    <property type="status" value="ALT_INIT"/>
    <property type="molecule type" value="Genomic_DNA"/>
</dbReference>
<dbReference type="RefSeq" id="WP_011049190.1">
    <property type="nucleotide sequence ID" value="NC_003911.12"/>
</dbReference>
<dbReference type="SMR" id="Q5LMQ3"/>
<dbReference type="STRING" id="246200.SPO3510"/>
<dbReference type="PaxDb" id="246200-SPO3510"/>
<dbReference type="KEGG" id="sil:SPO3510"/>
<dbReference type="eggNOG" id="COG0244">
    <property type="taxonomic scope" value="Bacteria"/>
</dbReference>
<dbReference type="HOGENOM" id="CLU_092227_0_0_5"/>
<dbReference type="OrthoDB" id="9791972at2"/>
<dbReference type="Proteomes" id="UP000001023">
    <property type="component" value="Chromosome"/>
</dbReference>
<dbReference type="GO" id="GO:0015934">
    <property type="term" value="C:large ribosomal subunit"/>
    <property type="evidence" value="ECO:0007669"/>
    <property type="project" value="InterPro"/>
</dbReference>
<dbReference type="GO" id="GO:0070180">
    <property type="term" value="F:large ribosomal subunit rRNA binding"/>
    <property type="evidence" value="ECO:0007669"/>
    <property type="project" value="UniProtKB-UniRule"/>
</dbReference>
<dbReference type="GO" id="GO:0003735">
    <property type="term" value="F:structural constituent of ribosome"/>
    <property type="evidence" value="ECO:0007669"/>
    <property type="project" value="InterPro"/>
</dbReference>
<dbReference type="GO" id="GO:0006412">
    <property type="term" value="P:translation"/>
    <property type="evidence" value="ECO:0007669"/>
    <property type="project" value="UniProtKB-UniRule"/>
</dbReference>
<dbReference type="CDD" id="cd05797">
    <property type="entry name" value="Ribosomal_L10"/>
    <property type="match status" value="1"/>
</dbReference>
<dbReference type="Gene3D" id="3.30.70.1730">
    <property type="match status" value="1"/>
</dbReference>
<dbReference type="Gene3D" id="6.10.250.290">
    <property type="match status" value="1"/>
</dbReference>
<dbReference type="HAMAP" id="MF_00362">
    <property type="entry name" value="Ribosomal_uL10"/>
    <property type="match status" value="1"/>
</dbReference>
<dbReference type="InterPro" id="IPR001790">
    <property type="entry name" value="Ribosomal_uL10"/>
</dbReference>
<dbReference type="InterPro" id="IPR043141">
    <property type="entry name" value="Ribosomal_uL10-like_sf"/>
</dbReference>
<dbReference type="InterPro" id="IPR022973">
    <property type="entry name" value="Ribosomal_uL10_bac"/>
</dbReference>
<dbReference type="InterPro" id="IPR047865">
    <property type="entry name" value="Ribosomal_uL10_bac_type"/>
</dbReference>
<dbReference type="InterPro" id="IPR002363">
    <property type="entry name" value="Ribosomal_uL10_CS_bac"/>
</dbReference>
<dbReference type="NCBIfam" id="NF000955">
    <property type="entry name" value="PRK00099.1-1"/>
    <property type="match status" value="1"/>
</dbReference>
<dbReference type="PANTHER" id="PTHR11560">
    <property type="entry name" value="39S RIBOSOMAL PROTEIN L10, MITOCHONDRIAL"/>
    <property type="match status" value="1"/>
</dbReference>
<dbReference type="Pfam" id="PF00466">
    <property type="entry name" value="Ribosomal_L10"/>
    <property type="match status" value="1"/>
</dbReference>
<dbReference type="SUPFAM" id="SSF160369">
    <property type="entry name" value="Ribosomal protein L10-like"/>
    <property type="match status" value="1"/>
</dbReference>
<dbReference type="PROSITE" id="PS01109">
    <property type="entry name" value="RIBOSOMAL_L10"/>
    <property type="match status" value="1"/>
</dbReference>
<evidence type="ECO:0000255" key="1">
    <source>
        <dbReference type="HAMAP-Rule" id="MF_00362"/>
    </source>
</evidence>
<evidence type="ECO:0000305" key="2"/>
<name>RL10_RUEPO</name>
<sequence>MDRAQKEKVVEELGQIFESSGVVVVAHYAGLTVAEMQDLRARAREAGGSVRVAKNRLAKIALEGKPCASMADLLTGMTVLTYSEDPVAAAKVAEGFAKDNKKFEILGGAMGENALDRAGVEAVSKMPSREELIAQIVSCIGAPASNIAGAIGAPASNIAGILSTIIEKAEAA</sequence>
<gene>
    <name evidence="1" type="primary">rplJ</name>
    <name type="ordered locus">SPO3510</name>
</gene>